<dbReference type="EC" id="2.7.1.39" evidence="1"/>
<dbReference type="EMBL" id="CP000450">
    <property type="protein sequence ID" value="ABI59045.1"/>
    <property type="molecule type" value="Genomic_DNA"/>
</dbReference>
<dbReference type="RefSeq" id="WP_011633870.1">
    <property type="nucleotide sequence ID" value="NC_008344.1"/>
</dbReference>
<dbReference type="SMR" id="Q0AHY7"/>
<dbReference type="STRING" id="335283.Neut_0775"/>
<dbReference type="KEGG" id="net:Neut_0775"/>
<dbReference type="eggNOG" id="COG2334">
    <property type="taxonomic scope" value="Bacteria"/>
</dbReference>
<dbReference type="HOGENOM" id="CLU_053300_0_0_4"/>
<dbReference type="OrthoDB" id="9777460at2"/>
<dbReference type="UniPathway" id="UPA00050">
    <property type="reaction ID" value="UER00064"/>
</dbReference>
<dbReference type="Proteomes" id="UP000001966">
    <property type="component" value="Chromosome"/>
</dbReference>
<dbReference type="GO" id="GO:0005524">
    <property type="term" value="F:ATP binding"/>
    <property type="evidence" value="ECO:0007669"/>
    <property type="project" value="UniProtKB-KW"/>
</dbReference>
<dbReference type="GO" id="GO:0004413">
    <property type="term" value="F:homoserine kinase activity"/>
    <property type="evidence" value="ECO:0007669"/>
    <property type="project" value="UniProtKB-UniRule"/>
</dbReference>
<dbReference type="GO" id="GO:0009088">
    <property type="term" value="P:threonine biosynthetic process"/>
    <property type="evidence" value="ECO:0007669"/>
    <property type="project" value="UniProtKB-UniRule"/>
</dbReference>
<dbReference type="CDD" id="cd05153">
    <property type="entry name" value="HomoserineK_II"/>
    <property type="match status" value="1"/>
</dbReference>
<dbReference type="Gene3D" id="3.90.1200.10">
    <property type="match status" value="1"/>
</dbReference>
<dbReference type="Gene3D" id="3.30.200.20">
    <property type="entry name" value="Phosphorylase Kinase, domain 1"/>
    <property type="match status" value="1"/>
</dbReference>
<dbReference type="HAMAP" id="MF_00301">
    <property type="entry name" value="Homoser_kinase_2"/>
    <property type="match status" value="1"/>
</dbReference>
<dbReference type="InterPro" id="IPR002575">
    <property type="entry name" value="Aminoglycoside_PTrfase"/>
</dbReference>
<dbReference type="InterPro" id="IPR005280">
    <property type="entry name" value="Homoserine_kinase_II"/>
</dbReference>
<dbReference type="InterPro" id="IPR011009">
    <property type="entry name" value="Kinase-like_dom_sf"/>
</dbReference>
<dbReference type="InterPro" id="IPR050249">
    <property type="entry name" value="Pseudomonas-type_ThrB"/>
</dbReference>
<dbReference type="NCBIfam" id="NF003558">
    <property type="entry name" value="PRK05231.1"/>
    <property type="match status" value="1"/>
</dbReference>
<dbReference type="NCBIfam" id="TIGR00938">
    <property type="entry name" value="thrB_alt"/>
    <property type="match status" value="1"/>
</dbReference>
<dbReference type="PANTHER" id="PTHR21064:SF6">
    <property type="entry name" value="AMINOGLYCOSIDE PHOSPHOTRANSFERASE DOMAIN-CONTAINING PROTEIN"/>
    <property type="match status" value="1"/>
</dbReference>
<dbReference type="PANTHER" id="PTHR21064">
    <property type="entry name" value="AMINOGLYCOSIDE PHOSPHOTRANSFERASE DOMAIN-CONTAINING PROTEIN-RELATED"/>
    <property type="match status" value="1"/>
</dbReference>
<dbReference type="Pfam" id="PF01636">
    <property type="entry name" value="APH"/>
    <property type="match status" value="1"/>
</dbReference>
<dbReference type="SUPFAM" id="SSF56112">
    <property type="entry name" value="Protein kinase-like (PK-like)"/>
    <property type="match status" value="1"/>
</dbReference>
<feature type="chain" id="PRO_1000022584" description="Homoserine kinase">
    <location>
        <begin position="1"/>
        <end position="316"/>
    </location>
</feature>
<reference key="1">
    <citation type="journal article" date="2007" name="Environ. Microbiol.">
        <title>Whole-genome analysis of the ammonia-oxidizing bacterium, Nitrosomonas eutropha C91: implications for niche adaptation.</title>
        <authorList>
            <person name="Stein L.Y."/>
            <person name="Arp D.J."/>
            <person name="Berube P.M."/>
            <person name="Chain P.S."/>
            <person name="Hauser L."/>
            <person name="Jetten M.S."/>
            <person name="Klotz M.G."/>
            <person name="Larimer F.W."/>
            <person name="Norton J.M."/>
            <person name="Op den Camp H.J.M."/>
            <person name="Shin M."/>
            <person name="Wei X."/>
        </authorList>
    </citation>
    <scope>NUCLEOTIDE SEQUENCE [LARGE SCALE GENOMIC DNA]</scope>
    <source>
        <strain>DSM 101675 / C91 / Nm57</strain>
    </source>
</reference>
<organism>
    <name type="scientific">Nitrosomonas eutropha (strain DSM 101675 / C91 / Nm57)</name>
    <dbReference type="NCBI Taxonomy" id="335283"/>
    <lineage>
        <taxon>Bacteria</taxon>
        <taxon>Pseudomonadati</taxon>
        <taxon>Pseudomonadota</taxon>
        <taxon>Betaproteobacteria</taxon>
        <taxon>Nitrosomonadales</taxon>
        <taxon>Nitrosomonadaceae</taxon>
        <taxon>Nitrosomonas</taxon>
    </lineage>
</organism>
<protein>
    <recommendedName>
        <fullName evidence="1">Homoserine kinase</fullName>
        <shortName evidence="1">HK</shortName>
        <shortName evidence="1">HSK</shortName>
        <ecNumber evidence="1">2.7.1.39</ecNumber>
    </recommendedName>
</protein>
<evidence type="ECO:0000255" key="1">
    <source>
        <dbReference type="HAMAP-Rule" id="MF_00301"/>
    </source>
</evidence>
<gene>
    <name evidence="1" type="primary">thrB</name>
    <name type="ordered locus">Neut_0775</name>
</gene>
<keyword id="KW-0028">Amino-acid biosynthesis</keyword>
<keyword id="KW-0067">ATP-binding</keyword>
<keyword id="KW-0418">Kinase</keyword>
<keyword id="KW-0547">Nucleotide-binding</keyword>
<keyword id="KW-0791">Threonine biosynthesis</keyword>
<keyword id="KW-0808">Transferase</keyword>
<comment type="catalytic activity">
    <reaction evidence="1">
        <text>L-homoserine + ATP = O-phospho-L-homoserine + ADP + H(+)</text>
        <dbReference type="Rhea" id="RHEA:13985"/>
        <dbReference type="ChEBI" id="CHEBI:15378"/>
        <dbReference type="ChEBI" id="CHEBI:30616"/>
        <dbReference type="ChEBI" id="CHEBI:57476"/>
        <dbReference type="ChEBI" id="CHEBI:57590"/>
        <dbReference type="ChEBI" id="CHEBI:456216"/>
        <dbReference type="EC" id="2.7.1.39"/>
    </reaction>
</comment>
<comment type="pathway">
    <text evidence="1">Amino-acid biosynthesis; L-threonine biosynthesis; L-threonine from L-aspartate: step 4/5.</text>
</comment>
<comment type="similarity">
    <text evidence="1">Belongs to the pseudomonas-type ThrB family.</text>
</comment>
<accession>Q0AHY7</accession>
<proteinExistence type="inferred from homology"/>
<sequence length="316" mass="35554">MSVFTPVTKKQLAVWLQNYSLGSLTDLQGISSGIENTNYFVTTTQGKFILTLFEKLTSTELPFYLNLMAYLSEQGIPCPKPIESQDHALLGTLNGKPASIVSFLPGQSMTQIREEQCAQVGEILAKMHLAGLNYNGKNRNPRGLDWWQTAAGTVMPFLSRSEQSLLDEELQFQIKQRTTNLPQGIIHADLFRDNVLFTSTGIGGIIDFYFACNDALLYDLAITANDWCTLGDGVMDKARMHALVKAYQAARPLTAEEYPAWPAMLRAGALRFWLSRLYDYYLPRPGELTHKKDPEYFRKILEYHLTNPSVLPSLQA</sequence>
<name>KHSE_NITEC</name>